<gene>
    <name evidence="1" type="primary">erpA</name>
    <name type="ordered locus">CPS_4622</name>
</gene>
<reference key="1">
    <citation type="journal article" date="2005" name="Proc. Natl. Acad. Sci. U.S.A.">
        <title>The psychrophilic lifestyle as revealed by the genome sequence of Colwellia psychrerythraea 34H through genomic and proteomic analyses.</title>
        <authorList>
            <person name="Methe B.A."/>
            <person name="Nelson K.E."/>
            <person name="Deming J.W."/>
            <person name="Momen B."/>
            <person name="Melamud E."/>
            <person name="Zhang X."/>
            <person name="Moult J."/>
            <person name="Madupu R."/>
            <person name="Nelson W.C."/>
            <person name="Dodson R.J."/>
            <person name="Brinkac L.M."/>
            <person name="Daugherty S.C."/>
            <person name="Durkin A.S."/>
            <person name="DeBoy R.T."/>
            <person name="Kolonay J.F."/>
            <person name="Sullivan S.A."/>
            <person name="Zhou L."/>
            <person name="Davidsen T.M."/>
            <person name="Wu M."/>
            <person name="Huston A.L."/>
            <person name="Lewis M."/>
            <person name="Weaver B."/>
            <person name="Weidman J.F."/>
            <person name="Khouri H."/>
            <person name="Utterback T.R."/>
            <person name="Feldblyum T.V."/>
            <person name="Fraser C.M."/>
        </authorList>
    </citation>
    <scope>NUCLEOTIDE SEQUENCE [LARGE SCALE GENOMIC DNA]</scope>
    <source>
        <strain>34H / ATCC BAA-681</strain>
    </source>
</reference>
<comment type="function">
    <text evidence="1">Required for insertion of 4Fe-4S clusters for at least IspG.</text>
</comment>
<comment type="cofactor">
    <cofactor evidence="1">
        <name>iron-sulfur cluster</name>
        <dbReference type="ChEBI" id="CHEBI:30408"/>
    </cofactor>
    <text evidence="1">Binds 1 iron-sulfur cluster per subunit.</text>
</comment>
<comment type="subunit">
    <text evidence="1">Homodimer.</text>
</comment>
<comment type="similarity">
    <text evidence="1">Belongs to the HesB/IscA family.</text>
</comment>
<accession>Q47VA3</accession>
<sequence>MSNPELPIKFTDSAASKVLSLITEEENPALKLRVYVTGGGCSGFQYGFTFDEKVNDGDMTIEKQGVMMVIDPMSLQYLVDGEVDYLESLEGSRFVVNNPNATTTCGCGSSFSI</sequence>
<protein>
    <recommendedName>
        <fullName evidence="1">Iron-sulfur cluster insertion protein ErpA</fullName>
    </recommendedName>
</protein>
<keyword id="KW-0408">Iron</keyword>
<keyword id="KW-0411">Iron-sulfur</keyword>
<keyword id="KW-0479">Metal-binding</keyword>
<evidence type="ECO:0000255" key="1">
    <source>
        <dbReference type="HAMAP-Rule" id="MF_01380"/>
    </source>
</evidence>
<name>ERPA_COLP3</name>
<dbReference type="EMBL" id="CP000083">
    <property type="protein sequence ID" value="AAZ24143.1"/>
    <property type="molecule type" value="Genomic_DNA"/>
</dbReference>
<dbReference type="RefSeq" id="WP_011045350.1">
    <property type="nucleotide sequence ID" value="NC_003910.7"/>
</dbReference>
<dbReference type="SMR" id="Q47VA3"/>
<dbReference type="STRING" id="167879.CPS_4622"/>
<dbReference type="KEGG" id="cps:CPS_4622"/>
<dbReference type="eggNOG" id="COG0316">
    <property type="taxonomic scope" value="Bacteria"/>
</dbReference>
<dbReference type="HOGENOM" id="CLU_069054_5_3_6"/>
<dbReference type="Proteomes" id="UP000000547">
    <property type="component" value="Chromosome"/>
</dbReference>
<dbReference type="GO" id="GO:0005829">
    <property type="term" value="C:cytosol"/>
    <property type="evidence" value="ECO:0007669"/>
    <property type="project" value="TreeGrafter"/>
</dbReference>
<dbReference type="GO" id="GO:0051537">
    <property type="term" value="F:2 iron, 2 sulfur cluster binding"/>
    <property type="evidence" value="ECO:0007669"/>
    <property type="project" value="TreeGrafter"/>
</dbReference>
<dbReference type="GO" id="GO:0051539">
    <property type="term" value="F:4 iron, 4 sulfur cluster binding"/>
    <property type="evidence" value="ECO:0007669"/>
    <property type="project" value="TreeGrafter"/>
</dbReference>
<dbReference type="GO" id="GO:0005506">
    <property type="term" value="F:iron ion binding"/>
    <property type="evidence" value="ECO:0007669"/>
    <property type="project" value="UniProtKB-UniRule"/>
</dbReference>
<dbReference type="GO" id="GO:0016226">
    <property type="term" value="P:iron-sulfur cluster assembly"/>
    <property type="evidence" value="ECO:0007669"/>
    <property type="project" value="UniProtKB-UniRule"/>
</dbReference>
<dbReference type="FunFam" id="2.60.300.12:FF:000002">
    <property type="entry name" value="Iron-sulfur cluster insertion protein ErpA"/>
    <property type="match status" value="1"/>
</dbReference>
<dbReference type="Gene3D" id="2.60.300.12">
    <property type="entry name" value="HesB-like domain"/>
    <property type="match status" value="1"/>
</dbReference>
<dbReference type="HAMAP" id="MF_01380">
    <property type="entry name" value="Fe_S_insert_ErpA"/>
    <property type="match status" value="1"/>
</dbReference>
<dbReference type="InterPro" id="IPR000361">
    <property type="entry name" value="FeS_biogenesis"/>
</dbReference>
<dbReference type="InterPro" id="IPR016092">
    <property type="entry name" value="FeS_cluster_insertion"/>
</dbReference>
<dbReference type="InterPro" id="IPR017870">
    <property type="entry name" value="FeS_cluster_insertion_CS"/>
</dbReference>
<dbReference type="InterPro" id="IPR023063">
    <property type="entry name" value="FeS_cluster_insertion_RrpA"/>
</dbReference>
<dbReference type="InterPro" id="IPR035903">
    <property type="entry name" value="HesB-like_dom_sf"/>
</dbReference>
<dbReference type="NCBIfam" id="TIGR00049">
    <property type="entry name" value="iron-sulfur cluster assembly accessory protein"/>
    <property type="match status" value="1"/>
</dbReference>
<dbReference type="NCBIfam" id="NF010147">
    <property type="entry name" value="PRK13623.1"/>
    <property type="match status" value="1"/>
</dbReference>
<dbReference type="PANTHER" id="PTHR43011">
    <property type="entry name" value="IRON-SULFUR CLUSTER ASSEMBLY 2 HOMOLOG, MITOCHONDRIAL"/>
    <property type="match status" value="1"/>
</dbReference>
<dbReference type="PANTHER" id="PTHR43011:SF1">
    <property type="entry name" value="IRON-SULFUR CLUSTER ASSEMBLY 2 HOMOLOG, MITOCHONDRIAL"/>
    <property type="match status" value="1"/>
</dbReference>
<dbReference type="Pfam" id="PF01521">
    <property type="entry name" value="Fe-S_biosyn"/>
    <property type="match status" value="1"/>
</dbReference>
<dbReference type="SUPFAM" id="SSF89360">
    <property type="entry name" value="HesB-like domain"/>
    <property type="match status" value="1"/>
</dbReference>
<dbReference type="PROSITE" id="PS01152">
    <property type="entry name" value="HESB"/>
    <property type="match status" value="1"/>
</dbReference>
<feature type="chain" id="PRO_0000311473" description="Iron-sulfur cluster insertion protein ErpA">
    <location>
        <begin position="1"/>
        <end position="113"/>
    </location>
</feature>
<feature type="binding site" evidence="1">
    <location>
        <position position="41"/>
    </location>
    <ligand>
        <name>iron-sulfur cluster</name>
        <dbReference type="ChEBI" id="CHEBI:30408"/>
    </ligand>
</feature>
<feature type="binding site" evidence="1">
    <location>
        <position position="105"/>
    </location>
    <ligand>
        <name>iron-sulfur cluster</name>
        <dbReference type="ChEBI" id="CHEBI:30408"/>
    </ligand>
</feature>
<feature type="binding site" evidence="1">
    <location>
        <position position="107"/>
    </location>
    <ligand>
        <name>iron-sulfur cluster</name>
        <dbReference type="ChEBI" id="CHEBI:30408"/>
    </ligand>
</feature>
<organism>
    <name type="scientific">Colwellia psychrerythraea (strain 34H / ATCC BAA-681)</name>
    <name type="common">Vibrio psychroerythus</name>
    <dbReference type="NCBI Taxonomy" id="167879"/>
    <lineage>
        <taxon>Bacteria</taxon>
        <taxon>Pseudomonadati</taxon>
        <taxon>Pseudomonadota</taxon>
        <taxon>Gammaproteobacteria</taxon>
        <taxon>Alteromonadales</taxon>
        <taxon>Colwelliaceae</taxon>
        <taxon>Colwellia</taxon>
    </lineage>
</organism>
<proteinExistence type="inferred from homology"/>